<reference key="1">
    <citation type="journal article" date="2011" name="MBio">
        <title>Novel metabolic attributes of the genus Cyanothece, comprising a group of unicellular nitrogen-fixing Cyanobacteria.</title>
        <authorList>
            <person name="Bandyopadhyay A."/>
            <person name="Elvitigala T."/>
            <person name="Welsh E."/>
            <person name="Stockel J."/>
            <person name="Liberton M."/>
            <person name="Min H."/>
            <person name="Sherman L.A."/>
            <person name="Pakrasi H.B."/>
        </authorList>
    </citation>
    <scope>NUCLEOTIDE SEQUENCE [LARGE SCALE GENOMIC DNA]</scope>
    <source>
        <strain>PCC 7424</strain>
    </source>
</reference>
<gene>
    <name evidence="1" type="primary">aroE</name>
    <name type="ordered locus">PCC7424_0690</name>
</gene>
<protein>
    <recommendedName>
        <fullName evidence="1">Shikimate dehydrogenase (NADP(+))</fullName>
        <shortName evidence="1">SDH</shortName>
        <ecNumber evidence="1">1.1.1.25</ecNumber>
    </recommendedName>
</protein>
<sequence length="288" mass="31617">MPLITGKTKLLGVIGDPVEHSLSPVMHNAVIDHLNLNYIYVPFAVKPEDLRTAIAGLEAIGVVGFNLTIPHKQTIIPLLSTISETAQLVGAVNTVWRTETGWSGTNTDVHGFLAPLKRLNLPWSQVSPVILGNGGAARAVVVGCYEMGCRQISVVGRTKEKLDHFYQSWQNTPIQEALRVYLWEDLPQLVSKTQLLINTTPLGMSPHIDQSPVDLTVMKKLQPGAIAYDLIYTPNPTLFLKEAQQQGAIIIDGLEMLAQQGALALSIWIKQSVPVEIMSQSLRDYLNL</sequence>
<keyword id="KW-0028">Amino-acid biosynthesis</keyword>
<keyword id="KW-0057">Aromatic amino acid biosynthesis</keyword>
<keyword id="KW-0521">NADP</keyword>
<keyword id="KW-0560">Oxidoreductase</keyword>
<keyword id="KW-1185">Reference proteome</keyword>
<organism>
    <name type="scientific">Gloeothece citriformis (strain PCC 7424)</name>
    <name type="common">Cyanothece sp. (strain PCC 7424)</name>
    <dbReference type="NCBI Taxonomy" id="65393"/>
    <lineage>
        <taxon>Bacteria</taxon>
        <taxon>Bacillati</taxon>
        <taxon>Cyanobacteriota</taxon>
        <taxon>Cyanophyceae</taxon>
        <taxon>Oscillatoriophycideae</taxon>
        <taxon>Chroococcales</taxon>
        <taxon>Aphanothecaceae</taxon>
        <taxon>Gloeothece</taxon>
        <taxon>Gloeothece citriformis</taxon>
    </lineage>
</organism>
<proteinExistence type="inferred from homology"/>
<name>AROE_GLOC7</name>
<accession>B7KFV3</accession>
<dbReference type="EC" id="1.1.1.25" evidence="1"/>
<dbReference type="EMBL" id="CP001291">
    <property type="protein sequence ID" value="ACK69146.1"/>
    <property type="molecule type" value="Genomic_DNA"/>
</dbReference>
<dbReference type="RefSeq" id="WP_012598093.1">
    <property type="nucleotide sequence ID" value="NC_011729.1"/>
</dbReference>
<dbReference type="SMR" id="B7KFV3"/>
<dbReference type="STRING" id="65393.PCC7424_0690"/>
<dbReference type="KEGG" id="cyc:PCC7424_0690"/>
<dbReference type="eggNOG" id="COG0169">
    <property type="taxonomic scope" value="Bacteria"/>
</dbReference>
<dbReference type="HOGENOM" id="CLU_044063_4_1_3"/>
<dbReference type="OrthoDB" id="9792692at2"/>
<dbReference type="UniPathway" id="UPA00053">
    <property type="reaction ID" value="UER00087"/>
</dbReference>
<dbReference type="Proteomes" id="UP000002384">
    <property type="component" value="Chromosome"/>
</dbReference>
<dbReference type="GO" id="GO:0005829">
    <property type="term" value="C:cytosol"/>
    <property type="evidence" value="ECO:0007669"/>
    <property type="project" value="TreeGrafter"/>
</dbReference>
<dbReference type="GO" id="GO:0050661">
    <property type="term" value="F:NADP binding"/>
    <property type="evidence" value="ECO:0007669"/>
    <property type="project" value="InterPro"/>
</dbReference>
<dbReference type="GO" id="GO:0004764">
    <property type="term" value="F:shikimate 3-dehydrogenase (NADP+) activity"/>
    <property type="evidence" value="ECO:0007669"/>
    <property type="project" value="UniProtKB-UniRule"/>
</dbReference>
<dbReference type="GO" id="GO:0008652">
    <property type="term" value="P:amino acid biosynthetic process"/>
    <property type="evidence" value="ECO:0007669"/>
    <property type="project" value="UniProtKB-KW"/>
</dbReference>
<dbReference type="GO" id="GO:0009073">
    <property type="term" value="P:aromatic amino acid family biosynthetic process"/>
    <property type="evidence" value="ECO:0007669"/>
    <property type="project" value="UniProtKB-KW"/>
</dbReference>
<dbReference type="GO" id="GO:0009423">
    <property type="term" value="P:chorismate biosynthetic process"/>
    <property type="evidence" value="ECO:0007669"/>
    <property type="project" value="UniProtKB-UniRule"/>
</dbReference>
<dbReference type="GO" id="GO:0019632">
    <property type="term" value="P:shikimate metabolic process"/>
    <property type="evidence" value="ECO:0007669"/>
    <property type="project" value="InterPro"/>
</dbReference>
<dbReference type="CDD" id="cd01065">
    <property type="entry name" value="NAD_bind_Shikimate_DH"/>
    <property type="match status" value="1"/>
</dbReference>
<dbReference type="Gene3D" id="3.40.50.10860">
    <property type="entry name" value="Leucine Dehydrogenase, chain A, domain 1"/>
    <property type="match status" value="1"/>
</dbReference>
<dbReference type="Gene3D" id="3.40.50.720">
    <property type="entry name" value="NAD(P)-binding Rossmann-like Domain"/>
    <property type="match status" value="1"/>
</dbReference>
<dbReference type="HAMAP" id="MF_00222">
    <property type="entry name" value="Shikimate_DH_AroE"/>
    <property type="match status" value="1"/>
</dbReference>
<dbReference type="InterPro" id="IPR046346">
    <property type="entry name" value="Aminoacid_DH-like_N_sf"/>
</dbReference>
<dbReference type="InterPro" id="IPR036291">
    <property type="entry name" value="NAD(P)-bd_dom_sf"/>
</dbReference>
<dbReference type="InterPro" id="IPR041121">
    <property type="entry name" value="SDH_C"/>
</dbReference>
<dbReference type="InterPro" id="IPR011342">
    <property type="entry name" value="Shikimate_DH"/>
</dbReference>
<dbReference type="InterPro" id="IPR013708">
    <property type="entry name" value="Shikimate_DH-bd_N"/>
</dbReference>
<dbReference type="InterPro" id="IPR022893">
    <property type="entry name" value="Shikimate_DH_fam"/>
</dbReference>
<dbReference type="NCBIfam" id="TIGR00507">
    <property type="entry name" value="aroE"/>
    <property type="match status" value="1"/>
</dbReference>
<dbReference type="NCBIfam" id="NF001314">
    <property type="entry name" value="PRK00258.2-2"/>
    <property type="match status" value="1"/>
</dbReference>
<dbReference type="PANTHER" id="PTHR21089:SF1">
    <property type="entry name" value="BIFUNCTIONAL 3-DEHYDROQUINATE DEHYDRATASE_SHIKIMATE DEHYDROGENASE, CHLOROPLASTIC"/>
    <property type="match status" value="1"/>
</dbReference>
<dbReference type="PANTHER" id="PTHR21089">
    <property type="entry name" value="SHIKIMATE DEHYDROGENASE"/>
    <property type="match status" value="1"/>
</dbReference>
<dbReference type="Pfam" id="PF18317">
    <property type="entry name" value="SDH_C"/>
    <property type="match status" value="1"/>
</dbReference>
<dbReference type="Pfam" id="PF08501">
    <property type="entry name" value="Shikimate_dh_N"/>
    <property type="match status" value="1"/>
</dbReference>
<dbReference type="SUPFAM" id="SSF53223">
    <property type="entry name" value="Aminoacid dehydrogenase-like, N-terminal domain"/>
    <property type="match status" value="1"/>
</dbReference>
<dbReference type="SUPFAM" id="SSF51735">
    <property type="entry name" value="NAD(P)-binding Rossmann-fold domains"/>
    <property type="match status" value="1"/>
</dbReference>
<evidence type="ECO:0000255" key="1">
    <source>
        <dbReference type="HAMAP-Rule" id="MF_00222"/>
    </source>
</evidence>
<comment type="function">
    <text evidence="1">Involved in the biosynthesis of the chorismate, which leads to the biosynthesis of aromatic amino acids. Catalyzes the reversible NADPH linked reduction of 3-dehydroshikimate (DHSA) to yield shikimate (SA).</text>
</comment>
<comment type="catalytic activity">
    <reaction evidence="1">
        <text>shikimate + NADP(+) = 3-dehydroshikimate + NADPH + H(+)</text>
        <dbReference type="Rhea" id="RHEA:17737"/>
        <dbReference type="ChEBI" id="CHEBI:15378"/>
        <dbReference type="ChEBI" id="CHEBI:16630"/>
        <dbReference type="ChEBI" id="CHEBI:36208"/>
        <dbReference type="ChEBI" id="CHEBI:57783"/>
        <dbReference type="ChEBI" id="CHEBI:58349"/>
        <dbReference type="EC" id="1.1.1.25"/>
    </reaction>
</comment>
<comment type="pathway">
    <text evidence="1">Metabolic intermediate biosynthesis; chorismate biosynthesis; chorismate from D-erythrose 4-phosphate and phosphoenolpyruvate: step 4/7.</text>
</comment>
<comment type="subunit">
    <text evidence="1">Homodimer.</text>
</comment>
<comment type="similarity">
    <text evidence="1">Belongs to the shikimate dehydrogenase family.</text>
</comment>
<feature type="chain" id="PRO_1000118872" description="Shikimate dehydrogenase (NADP(+))">
    <location>
        <begin position="1"/>
        <end position="288"/>
    </location>
</feature>
<feature type="active site" description="Proton acceptor" evidence="1">
    <location>
        <position position="72"/>
    </location>
</feature>
<feature type="binding site" evidence="1">
    <location>
        <begin position="21"/>
        <end position="23"/>
    </location>
    <ligand>
        <name>shikimate</name>
        <dbReference type="ChEBI" id="CHEBI:36208"/>
    </ligand>
</feature>
<feature type="binding site" evidence="1">
    <location>
        <position position="68"/>
    </location>
    <ligand>
        <name>shikimate</name>
        <dbReference type="ChEBI" id="CHEBI:36208"/>
    </ligand>
</feature>
<feature type="binding site" evidence="1">
    <location>
        <position position="84"/>
    </location>
    <ligand>
        <name>NADP(+)</name>
        <dbReference type="ChEBI" id="CHEBI:58349"/>
    </ligand>
</feature>
<feature type="binding site" evidence="1">
    <location>
        <position position="93"/>
    </location>
    <ligand>
        <name>shikimate</name>
        <dbReference type="ChEBI" id="CHEBI:36208"/>
    </ligand>
</feature>
<feature type="binding site" evidence="1">
    <location>
        <position position="108"/>
    </location>
    <ligand>
        <name>shikimate</name>
        <dbReference type="ChEBI" id="CHEBI:36208"/>
    </ligand>
</feature>
<feature type="binding site" evidence="1">
    <location>
        <begin position="132"/>
        <end position="136"/>
    </location>
    <ligand>
        <name>NADP(+)</name>
        <dbReference type="ChEBI" id="CHEBI:58349"/>
    </ligand>
</feature>
<feature type="binding site" evidence="1">
    <location>
        <position position="230"/>
    </location>
    <ligand>
        <name>NADP(+)</name>
        <dbReference type="ChEBI" id="CHEBI:58349"/>
    </ligand>
</feature>
<feature type="binding site" evidence="1">
    <location>
        <position position="232"/>
    </location>
    <ligand>
        <name>shikimate</name>
        <dbReference type="ChEBI" id="CHEBI:36208"/>
    </ligand>
</feature>
<feature type="binding site" evidence="1">
    <location>
        <position position="253"/>
    </location>
    <ligand>
        <name>NADP(+)</name>
        <dbReference type="ChEBI" id="CHEBI:58349"/>
    </ligand>
</feature>